<feature type="chain" id="PRO_0000120690" description="NAD kinase">
    <location>
        <begin position="1"/>
        <end position="295"/>
    </location>
</feature>
<feature type="active site" description="Proton acceptor" evidence="1">
    <location>
        <position position="73"/>
    </location>
</feature>
<feature type="binding site" evidence="1">
    <location>
        <begin position="73"/>
        <end position="74"/>
    </location>
    <ligand>
        <name>NAD(+)</name>
        <dbReference type="ChEBI" id="CHEBI:57540"/>
    </ligand>
</feature>
<feature type="binding site" evidence="1">
    <location>
        <position position="78"/>
    </location>
    <ligand>
        <name>NAD(+)</name>
        <dbReference type="ChEBI" id="CHEBI:57540"/>
    </ligand>
</feature>
<feature type="binding site" evidence="1">
    <location>
        <begin position="146"/>
        <end position="147"/>
    </location>
    <ligand>
        <name>NAD(+)</name>
        <dbReference type="ChEBI" id="CHEBI:57540"/>
    </ligand>
</feature>
<feature type="binding site" evidence="1">
    <location>
        <position position="157"/>
    </location>
    <ligand>
        <name>NAD(+)</name>
        <dbReference type="ChEBI" id="CHEBI:57540"/>
    </ligand>
</feature>
<feature type="binding site" evidence="1">
    <location>
        <position position="174"/>
    </location>
    <ligand>
        <name>NAD(+)</name>
        <dbReference type="ChEBI" id="CHEBI:57540"/>
    </ligand>
</feature>
<feature type="binding site" evidence="1">
    <location>
        <position position="176"/>
    </location>
    <ligand>
        <name>NAD(+)</name>
        <dbReference type="ChEBI" id="CHEBI:57540"/>
    </ligand>
</feature>
<feature type="binding site" evidence="1">
    <location>
        <begin position="187"/>
        <end position="192"/>
    </location>
    <ligand>
        <name>NAD(+)</name>
        <dbReference type="ChEBI" id="CHEBI:57540"/>
    </ligand>
</feature>
<evidence type="ECO:0000255" key="1">
    <source>
        <dbReference type="HAMAP-Rule" id="MF_00361"/>
    </source>
</evidence>
<keyword id="KW-0067">ATP-binding</keyword>
<keyword id="KW-0963">Cytoplasm</keyword>
<keyword id="KW-0418">Kinase</keyword>
<keyword id="KW-0520">NAD</keyword>
<keyword id="KW-0521">NADP</keyword>
<keyword id="KW-0547">Nucleotide-binding</keyword>
<keyword id="KW-1185">Reference proteome</keyword>
<keyword id="KW-0808">Transferase</keyword>
<proteinExistence type="inferred from homology"/>
<protein>
    <recommendedName>
        <fullName evidence="1">NAD kinase</fullName>
        <ecNumber evidence="1">2.7.1.23</ecNumber>
    </recommendedName>
    <alternativeName>
        <fullName evidence="1">ATP-dependent NAD kinase</fullName>
    </alternativeName>
</protein>
<accession>Q8D391</accession>
<organism>
    <name type="scientific">Wigglesworthia glossinidia brevipalpis</name>
    <dbReference type="NCBI Taxonomy" id="36870"/>
    <lineage>
        <taxon>Bacteria</taxon>
        <taxon>Pseudomonadati</taxon>
        <taxon>Pseudomonadota</taxon>
        <taxon>Gammaproteobacteria</taxon>
        <taxon>Enterobacterales</taxon>
        <taxon>Erwiniaceae</taxon>
        <taxon>Wigglesworthia</taxon>
    </lineage>
</organism>
<name>NADK_WIGBR</name>
<reference key="1">
    <citation type="journal article" date="2002" name="Nat. Genet.">
        <title>Genome sequence of the endocellular obligate symbiont of tsetse flies, Wigglesworthia glossinidia.</title>
        <authorList>
            <person name="Akman L."/>
            <person name="Yamashita A."/>
            <person name="Watanabe H."/>
            <person name="Oshima K."/>
            <person name="Shiba T."/>
            <person name="Hattori M."/>
            <person name="Aksoy S."/>
        </authorList>
    </citation>
    <scope>NUCLEOTIDE SEQUENCE [LARGE SCALE GENOMIC DNA]</scope>
</reference>
<dbReference type="EC" id="2.7.1.23" evidence="1"/>
<dbReference type="EMBL" id="BA000021">
    <property type="protein sequence ID" value="BAC24256.1"/>
    <property type="molecule type" value="Genomic_DNA"/>
</dbReference>
<dbReference type="SMR" id="Q8D391"/>
<dbReference type="STRING" id="36870.gene:10368588"/>
<dbReference type="KEGG" id="wbr:yfjB"/>
<dbReference type="eggNOG" id="COG0061">
    <property type="taxonomic scope" value="Bacteria"/>
</dbReference>
<dbReference type="HOGENOM" id="CLU_008831_0_1_6"/>
<dbReference type="OrthoDB" id="9774737at2"/>
<dbReference type="Proteomes" id="UP000000562">
    <property type="component" value="Chromosome"/>
</dbReference>
<dbReference type="GO" id="GO:0005737">
    <property type="term" value="C:cytoplasm"/>
    <property type="evidence" value="ECO:0007669"/>
    <property type="project" value="UniProtKB-SubCell"/>
</dbReference>
<dbReference type="GO" id="GO:0005524">
    <property type="term" value="F:ATP binding"/>
    <property type="evidence" value="ECO:0007669"/>
    <property type="project" value="UniProtKB-KW"/>
</dbReference>
<dbReference type="GO" id="GO:0046872">
    <property type="term" value="F:metal ion binding"/>
    <property type="evidence" value="ECO:0007669"/>
    <property type="project" value="UniProtKB-UniRule"/>
</dbReference>
<dbReference type="GO" id="GO:0051287">
    <property type="term" value="F:NAD binding"/>
    <property type="evidence" value="ECO:0007669"/>
    <property type="project" value="UniProtKB-ARBA"/>
</dbReference>
<dbReference type="GO" id="GO:0003951">
    <property type="term" value="F:NAD+ kinase activity"/>
    <property type="evidence" value="ECO:0007669"/>
    <property type="project" value="UniProtKB-UniRule"/>
</dbReference>
<dbReference type="GO" id="GO:0019674">
    <property type="term" value="P:NAD metabolic process"/>
    <property type="evidence" value="ECO:0007669"/>
    <property type="project" value="InterPro"/>
</dbReference>
<dbReference type="GO" id="GO:0006741">
    <property type="term" value="P:NADP biosynthetic process"/>
    <property type="evidence" value="ECO:0007669"/>
    <property type="project" value="UniProtKB-UniRule"/>
</dbReference>
<dbReference type="FunFam" id="2.60.200.30:FF:000009">
    <property type="entry name" value="Poly(P)/ATP NAD kinase"/>
    <property type="match status" value="1"/>
</dbReference>
<dbReference type="Gene3D" id="3.40.50.10330">
    <property type="entry name" value="Probable inorganic polyphosphate/atp-NAD kinase, domain 1"/>
    <property type="match status" value="1"/>
</dbReference>
<dbReference type="Gene3D" id="2.60.200.30">
    <property type="entry name" value="Probable inorganic polyphosphate/atp-NAD kinase, domain 2"/>
    <property type="match status" value="1"/>
</dbReference>
<dbReference type="HAMAP" id="MF_00361">
    <property type="entry name" value="NAD_kinase"/>
    <property type="match status" value="1"/>
</dbReference>
<dbReference type="InterPro" id="IPR017438">
    <property type="entry name" value="ATP-NAD_kinase_N"/>
</dbReference>
<dbReference type="InterPro" id="IPR017437">
    <property type="entry name" value="ATP-NAD_kinase_PpnK-typ_C"/>
</dbReference>
<dbReference type="InterPro" id="IPR016064">
    <property type="entry name" value="NAD/diacylglycerol_kinase_sf"/>
</dbReference>
<dbReference type="InterPro" id="IPR002504">
    <property type="entry name" value="NADK"/>
</dbReference>
<dbReference type="NCBIfam" id="NF002893">
    <property type="entry name" value="PRK03378.1"/>
    <property type="match status" value="1"/>
</dbReference>
<dbReference type="PANTHER" id="PTHR20275">
    <property type="entry name" value="NAD KINASE"/>
    <property type="match status" value="1"/>
</dbReference>
<dbReference type="PANTHER" id="PTHR20275:SF0">
    <property type="entry name" value="NAD KINASE"/>
    <property type="match status" value="1"/>
</dbReference>
<dbReference type="Pfam" id="PF01513">
    <property type="entry name" value="NAD_kinase"/>
    <property type="match status" value="1"/>
</dbReference>
<dbReference type="Pfam" id="PF20143">
    <property type="entry name" value="NAD_kinase_C"/>
    <property type="match status" value="1"/>
</dbReference>
<dbReference type="SUPFAM" id="SSF111331">
    <property type="entry name" value="NAD kinase/diacylglycerol kinase-like"/>
    <property type="match status" value="1"/>
</dbReference>
<comment type="function">
    <text evidence="1">Involved in the regulation of the intracellular balance of NAD and NADP, and is a key enzyme in the biosynthesis of NADP. Catalyzes specifically the phosphorylation on 2'-hydroxyl of the adenosine moiety of NAD to yield NADP.</text>
</comment>
<comment type="catalytic activity">
    <reaction evidence="1">
        <text>NAD(+) + ATP = ADP + NADP(+) + H(+)</text>
        <dbReference type="Rhea" id="RHEA:18629"/>
        <dbReference type="ChEBI" id="CHEBI:15378"/>
        <dbReference type="ChEBI" id="CHEBI:30616"/>
        <dbReference type="ChEBI" id="CHEBI:57540"/>
        <dbReference type="ChEBI" id="CHEBI:58349"/>
        <dbReference type="ChEBI" id="CHEBI:456216"/>
        <dbReference type="EC" id="2.7.1.23"/>
    </reaction>
</comment>
<comment type="cofactor">
    <cofactor evidence="1">
        <name>a divalent metal cation</name>
        <dbReference type="ChEBI" id="CHEBI:60240"/>
    </cofactor>
</comment>
<comment type="subcellular location">
    <subcellularLocation>
        <location evidence="1">Cytoplasm</location>
    </subcellularLocation>
</comment>
<comment type="similarity">
    <text evidence="1">Belongs to the NAD kinase family.</text>
</comment>
<sequence>MNYVFCIIGIIGYRLCLEQLSIYNNLYNWLIKKGYSVILENNIAQALNLNNVISGSTFDIGEKADLAIIIGGDGSMLRIAKILSNYPIKVIGINTGNLGFLTDLNPKSALSTLNYILNGNFYEEKRFLLNVITIKNNIKSKKHILNEVVVHSNNVAKMIEFKVYIDDVFSFFQRADGLIISTPTGSTAYSLSAGGPILMPLLNAIIIIPMFPHGLYSRPLVISAKSKIKIKFSKKILNLSISCDGTSPFKVYRNNEIVIKKSKKFLKLIHSNNYNYFNVLRKKLGWSKKFFKKIK</sequence>
<gene>
    <name evidence="1" type="primary">nadK</name>
    <name type="ordered locus">WIGBR1100</name>
</gene>